<protein>
    <recommendedName>
        <fullName evidence="8">Zinc finger protein 516</fullName>
    </recommendedName>
</protein>
<proteinExistence type="evidence at protein level"/>
<dbReference type="EMBL" id="BC053104">
    <property type="protein sequence ID" value="AAH53104.1"/>
    <property type="molecule type" value="mRNA"/>
</dbReference>
<dbReference type="EMBL" id="AK129092">
    <property type="protein sequence ID" value="BAC97902.1"/>
    <property type="molecule type" value="mRNA"/>
</dbReference>
<dbReference type="CCDS" id="CCDS29380.1"/>
<dbReference type="RefSeq" id="NP_001170935.1">
    <property type="nucleotide sequence ID" value="NM_001177464.1"/>
</dbReference>
<dbReference type="RefSeq" id="NP_898854.1">
    <property type="nucleotide sequence ID" value="NM_183033.2"/>
</dbReference>
<dbReference type="RefSeq" id="XP_006526561.1">
    <property type="nucleotide sequence ID" value="XM_006526498.1"/>
</dbReference>
<dbReference type="RefSeq" id="XP_006526562.1">
    <property type="nucleotide sequence ID" value="XM_006526499.3"/>
</dbReference>
<dbReference type="RefSeq" id="XP_006526563.1">
    <property type="nucleotide sequence ID" value="XM_006526500.2"/>
</dbReference>
<dbReference type="RefSeq" id="XP_006526564.1">
    <property type="nucleotide sequence ID" value="XM_006526501.3"/>
</dbReference>
<dbReference type="RefSeq" id="XP_006526565.1">
    <property type="nucleotide sequence ID" value="XM_006526502.3"/>
</dbReference>
<dbReference type="RefSeq" id="XP_006526566.1">
    <property type="nucleotide sequence ID" value="XM_006526503.3"/>
</dbReference>
<dbReference type="RefSeq" id="XP_011245387.1">
    <property type="nucleotide sequence ID" value="XM_011247085.2"/>
</dbReference>
<dbReference type="BioGRID" id="236692">
    <property type="interactions" value="4"/>
</dbReference>
<dbReference type="FunCoup" id="Q7TSH3">
    <property type="interactions" value="2036"/>
</dbReference>
<dbReference type="IntAct" id="Q7TSH3">
    <property type="interactions" value="3"/>
</dbReference>
<dbReference type="MINT" id="Q7TSH3"/>
<dbReference type="STRING" id="10090.ENSMUSP00000126629"/>
<dbReference type="GlyGen" id="Q7TSH3">
    <property type="glycosylation" value="2 sites, 1 O-linked glycan (1 site)"/>
</dbReference>
<dbReference type="iPTMnet" id="Q7TSH3"/>
<dbReference type="PhosphoSitePlus" id="Q7TSH3"/>
<dbReference type="PaxDb" id="10090-ENSMUSP00000126629"/>
<dbReference type="PeptideAtlas" id="Q7TSH3"/>
<dbReference type="ProteomicsDB" id="299584"/>
<dbReference type="Pumba" id="Q7TSH3"/>
<dbReference type="Antibodypedia" id="5767">
    <property type="antibodies" value="67 antibodies from 15 providers"/>
</dbReference>
<dbReference type="Ensembl" id="ENSMUST00000071233.7">
    <property type="protein sequence ID" value="ENSMUSP00000071216.7"/>
    <property type="gene ID" value="ENSMUSG00000058881.14"/>
</dbReference>
<dbReference type="Ensembl" id="ENSMUST00000171238.8">
    <property type="protein sequence ID" value="ENSMUSP00000126629.2"/>
    <property type="gene ID" value="ENSMUSG00000058881.14"/>
</dbReference>
<dbReference type="GeneID" id="329003"/>
<dbReference type="KEGG" id="mmu:329003"/>
<dbReference type="UCSC" id="uc008fuf.2">
    <property type="organism name" value="mouse"/>
</dbReference>
<dbReference type="AGR" id="MGI:2443957"/>
<dbReference type="CTD" id="329003"/>
<dbReference type="MGI" id="MGI:2443957">
    <property type="gene designation" value="Zfp516"/>
</dbReference>
<dbReference type="VEuPathDB" id="HostDB:ENSMUSG00000058881"/>
<dbReference type="eggNOG" id="KOG1721">
    <property type="taxonomic scope" value="Eukaryota"/>
</dbReference>
<dbReference type="GeneTree" id="ENSGT00940000160839"/>
<dbReference type="HOGENOM" id="CLU_009481_0_0_1"/>
<dbReference type="InParanoid" id="Q7TSH3"/>
<dbReference type="OMA" id="YQGWGVG"/>
<dbReference type="OrthoDB" id="8852887at2759"/>
<dbReference type="PhylomeDB" id="Q7TSH3"/>
<dbReference type="TreeFam" id="TF332241"/>
<dbReference type="BioGRID-ORCS" id="329003">
    <property type="hits" value="6 hits in 78 CRISPR screens"/>
</dbReference>
<dbReference type="ChiTaRS" id="Zfp516">
    <property type="organism name" value="mouse"/>
</dbReference>
<dbReference type="PRO" id="PR:Q7TSH3"/>
<dbReference type="Proteomes" id="UP000000589">
    <property type="component" value="Chromosome 18"/>
</dbReference>
<dbReference type="RNAct" id="Q7TSH3">
    <property type="molecule type" value="protein"/>
</dbReference>
<dbReference type="Bgee" id="ENSMUSG00000058881">
    <property type="expression patterns" value="Expressed in manus and 224 other cell types or tissues"/>
</dbReference>
<dbReference type="ExpressionAtlas" id="Q7TSH3">
    <property type="expression patterns" value="baseline and differential"/>
</dbReference>
<dbReference type="GO" id="GO:0005634">
    <property type="term" value="C:nucleus"/>
    <property type="evidence" value="ECO:0000314"/>
    <property type="project" value="UniProtKB"/>
</dbReference>
<dbReference type="GO" id="GO:0000987">
    <property type="term" value="F:cis-regulatory region sequence-specific DNA binding"/>
    <property type="evidence" value="ECO:0000314"/>
    <property type="project" value="UniProtKB"/>
</dbReference>
<dbReference type="GO" id="GO:0140297">
    <property type="term" value="F:DNA-binding transcription factor binding"/>
    <property type="evidence" value="ECO:0000353"/>
    <property type="project" value="UniProtKB"/>
</dbReference>
<dbReference type="GO" id="GO:0008270">
    <property type="term" value="F:zinc ion binding"/>
    <property type="evidence" value="ECO:0007669"/>
    <property type="project" value="UniProtKB-KW"/>
</dbReference>
<dbReference type="GO" id="GO:0060612">
    <property type="term" value="P:adipose tissue development"/>
    <property type="evidence" value="ECO:0000315"/>
    <property type="project" value="UniProtKB"/>
</dbReference>
<dbReference type="GO" id="GO:0050873">
    <property type="term" value="P:brown fat cell differentiation"/>
    <property type="evidence" value="ECO:0000315"/>
    <property type="project" value="UniProtKB"/>
</dbReference>
<dbReference type="GO" id="GO:0120162">
    <property type="term" value="P:positive regulation of cold-induced thermogenesis"/>
    <property type="evidence" value="ECO:0000315"/>
    <property type="project" value="YuBioLab"/>
</dbReference>
<dbReference type="GO" id="GO:0045893">
    <property type="term" value="P:positive regulation of DNA-templated transcription"/>
    <property type="evidence" value="ECO:0000314"/>
    <property type="project" value="UniProtKB"/>
</dbReference>
<dbReference type="GO" id="GO:0009409">
    <property type="term" value="P:response to cold"/>
    <property type="evidence" value="ECO:0000314"/>
    <property type="project" value="UniProtKB"/>
</dbReference>
<dbReference type="FunFam" id="3.30.160.60:FF:000075">
    <property type="entry name" value="Putative zinc finger protein 536"/>
    <property type="match status" value="1"/>
</dbReference>
<dbReference type="FunFam" id="3.30.160.60:FF:000652">
    <property type="entry name" value="Zinc finger protein 516"/>
    <property type="match status" value="1"/>
</dbReference>
<dbReference type="FunFam" id="3.30.160.60:FF:001476">
    <property type="entry name" value="Zinc finger protein 516"/>
    <property type="match status" value="1"/>
</dbReference>
<dbReference type="FunFam" id="3.30.160.60:FF:001716">
    <property type="entry name" value="Zinc finger protein 516"/>
    <property type="match status" value="1"/>
</dbReference>
<dbReference type="FunFam" id="3.30.160.60:FF:002223">
    <property type="entry name" value="zinc finger protein 516 isoform X3"/>
    <property type="match status" value="1"/>
</dbReference>
<dbReference type="Gene3D" id="3.30.160.60">
    <property type="entry name" value="Classic Zinc Finger"/>
    <property type="match status" value="5"/>
</dbReference>
<dbReference type="InterPro" id="IPR051967">
    <property type="entry name" value="Krueppel_C2H2-ZF"/>
</dbReference>
<dbReference type="InterPro" id="IPR036236">
    <property type="entry name" value="Znf_C2H2_sf"/>
</dbReference>
<dbReference type="InterPro" id="IPR013087">
    <property type="entry name" value="Znf_C2H2_type"/>
</dbReference>
<dbReference type="PANTHER" id="PTHR45925">
    <property type="entry name" value="ZINC FINGER PROTEIN"/>
    <property type="match status" value="1"/>
</dbReference>
<dbReference type="PANTHER" id="PTHR45925:SF3">
    <property type="entry name" value="ZINC FINGER PROTEIN 516"/>
    <property type="match status" value="1"/>
</dbReference>
<dbReference type="Pfam" id="PF00096">
    <property type="entry name" value="zf-C2H2"/>
    <property type="match status" value="5"/>
</dbReference>
<dbReference type="SMART" id="SM00355">
    <property type="entry name" value="ZnF_C2H2"/>
    <property type="match status" value="10"/>
</dbReference>
<dbReference type="SUPFAM" id="SSF57667">
    <property type="entry name" value="beta-beta-alpha zinc fingers"/>
    <property type="match status" value="4"/>
</dbReference>
<dbReference type="PROSITE" id="PS00028">
    <property type="entry name" value="ZINC_FINGER_C2H2_1"/>
    <property type="match status" value="7"/>
</dbReference>
<dbReference type="PROSITE" id="PS50157">
    <property type="entry name" value="ZINC_FINGER_C2H2_2"/>
    <property type="match status" value="7"/>
</dbReference>
<organism>
    <name type="scientific">Mus musculus</name>
    <name type="common">Mouse</name>
    <dbReference type="NCBI Taxonomy" id="10090"/>
    <lineage>
        <taxon>Eukaryota</taxon>
        <taxon>Metazoa</taxon>
        <taxon>Chordata</taxon>
        <taxon>Craniata</taxon>
        <taxon>Vertebrata</taxon>
        <taxon>Euteleostomi</taxon>
        <taxon>Mammalia</taxon>
        <taxon>Eutheria</taxon>
        <taxon>Euarchontoglires</taxon>
        <taxon>Glires</taxon>
        <taxon>Rodentia</taxon>
        <taxon>Myomorpha</taxon>
        <taxon>Muroidea</taxon>
        <taxon>Muridae</taxon>
        <taxon>Murinae</taxon>
        <taxon>Mus</taxon>
        <taxon>Mus</taxon>
    </lineage>
</organism>
<reference key="1">
    <citation type="journal article" date="2004" name="Genome Res.">
        <title>The status, quality, and expansion of the NIH full-length cDNA project: the Mammalian Gene Collection (MGC).</title>
        <authorList>
            <consortium name="The MGC Project Team"/>
        </authorList>
    </citation>
    <scope>NUCLEOTIDE SEQUENCE [LARGE SCALE MRNA]</scope>
    <source>
        <strain>C57BL/6J</strain>
        <tissue>Brain</tissue>
    </source>
</reference>
<reference key="2">
    <citation type="journal article" date="2003" name="DNA Res.">
        <title>Prediction of the coding sequences of mouse homologues of KIAA gene: III. The complete nucleotide sequences of 500 mouse KIAA-homologous cDNAs identified by screening of terminal sequences of cDNA clones randomly sampled from size-fractionated libraries.</title>
        <authorList>
            <person name="Okazaki N."/>
            <person name="Kikuno R."/>
            <person name="Ohara R."/>
            <person name="Inamoto S."/>
            <person name="Koseki H."/>
            <person name="Hiraoka S."/>
            <person name="Saga Y."/>
            <person name="Nagase T."/>
            <person name="Ohara O."/>
            <person name="Koga H."/>
        </authorList>
    </citation>
    <scope>NUCLEOTIDE SEQUENCE [LARGE SCALE MRNA] OF 735-1157</scope>
    <source>
        <tissue>Fetal brain</tissue>
    </source>
</reference>
<reference key="3">
    <citation type="journal article" date="2015" name="Mol. Cell">
        <title>Cold-inducible Zfp516 activates UCP1 transcription to promote browning of white fat and development of brown fat.</title>
        <authorList>
            <person name="Dempersmier J."/>
            <person name="Sambeat A."/>
            <person name="Gulyaeva O."/>
            <person name="Paul S.M."/>
            <person name="Hudak C.S."/>
            <person name="Raposo H.F."/>
            <person name="Kwan H.Y."/>
            <person name="Kang C."/>
            <person name="Wong R.H."/>
            <person name="Sul H.S."/>
        </authorList>
    </citation>
    <scope>FUNCTION</scope>
    <scope>DISRUPTION PHENOTYPE</scope>
    <scope>INTERACTION WITH PRDM16</scope>
    <scope>SUBCELLULAR LOCATION</scope>
    <scope>REGION</scope>
    <scope>INDUCTION BY COLD</scope>
    <scope>TISSUE SPECIFICITY</scope>
</reference>
<reference key="4">
    <citation type="journal article" date="2021" name="Adv. Sci.">
        <title>PWWP2B Fine-Tunes Adipose Thermogenesis by Stabilizing HDACs in a NuRD Subcomplex.</title>
        <authorList>
            <person name="Yan L."/>
            <person name="Jin W."/>
            <person name="Zhao Q."/>
            <person name="Cui X."/>
            <person name="Shi T."/>
            <person name="Xu Y."/>
            <person name="Li F."/>
            <person name="Jin W."/>
            <person name="Zhang Z."/>
            <person name="Zhang Z."/>
            <person name="Tang Q.Q."/>
            <person name="Pan D."/>
        </authorList>
    </citation>
    <scope>INTERACTION WITH PWWP2B AND HDAC1</scope>
</reference>
<sequence>MDRSREAEMELRRGPSPPRAGRSHEVDGDKAACHSCCICGKSFPFQSSLSQHMRKHTGEKPYKCPYCDHRASQKGNLKIHIRSHRTGTLIQGHEPEAGEAQLGEMRVSEGLDGCASPTKSTSACNRVLNGAVPMDGSKILLRSSRKEVEGAASAQEDTEATVPCSFCKSRFERKKDLELHVHQAHKPFKCRLCSYVTLREESLLSHIERDHITAQVPNGSEACVENGKPELSPGEFPCEVCGQAFSQTWFLKAHMKKHRGSFDHGCHICGRRFKEPWFLKNHMKAHGPKAGSKNRPKSELDPIATINNVVQEEVIVAGLSLYEVCTKCGNLFTNLDSLNAHNAIHRKVEASRIRAPAEEGDSEDPLDTKQFFLQCLNLTPYVAGDVSPGGQAGRRVAELDPVNSYQAWQLATRGKVAEPAEYLKYGTWDEALAGDVAFDKDKREYILVSQEKRKREQDAPATQAPPRKRASVPGDPMLSGHLDPRPTSRPNRRASATTGQGKSSECFECGKIFRTYHQMVLHSRVHRRARRDRDPEGDRAARARCGSLSEGDSASQPSSPGSACAIADSPGLAEEVVDDSGEEAVPEPASGGQPRHCCSSGEVTPTALSNGDQNHKLGNNLPEKDISEPKVGSAMPSVSILENSSRETTKGPEQHRYSLDLKMPAFHPKQEVPSTTDRVDFPASMEITSLQHTLDSQAGHSKEKLSDLHKEHCGVGKRASAPDLVPLDLSMRSSRDEPSGKEACSLQAALVIHPCPYCTHKTYYPEVLWMHKRIWHRVSCSSVAPPWTQPSGHKSIRSNLVFLTRSGRTGPPPALGGKECQPLLLSRFARTQVPGGAPGSKGSSSPLGVTTKAASMPKNKESHSGGPCALWASGPDGYRQTRAGHGQEPPSAAVQGPLAKPKQEGSSRLAPSPGSGSLSRSTTPTPSVITRVGAQPSANSKPVEKLGGPAVGTGFTPPNKHSAPDSLKAKFSPQPQGQPPLKGEGGSPLPPREPSVKAAQELRTLATCAAGSRGEAALQAPPGAPPTLNSAKQEPAAEGQEKRLDILSIFKTYIPKDFATLYQGWGVSSPGPEHRGTSLTGTPRTQAHQGDFVCVECGKSFHQPSQLRAHLRAHTVVFECDGPRDSEVHTASTDAPKQGRDHTTPGTVPAGPLRKGI</sequence>
<name>ZN516_MOUSE</name>
<evidence type="ECO:0000250" key="1">
    <source>
        <dbReference type="UniProtKB" id="Q92618"/>
    </source>
</evidence>
<evidence type="ECO:0000255" key="2">
    <source>
        <dbReference type="PROSITE-ProRule" id="PRU00042"/>
    </source>
</evidence>
<evidence type="ECO:0000256" key="3">
    <source>
        <dbReference type="SAM" id="MobiDB-lite"/>
    </source>
</evidence>
<evidence type="ECO:0000269" key="4">
    <source>
    </source>
</evidence>
<evidence type="ECO:0000269" key="5">
    <source>
    </source>
</evidence>
<evidence type="ECO:0000305" key="6"/>
<evidence type="ECO:0000312" key="7">
    <source>
        <dbReference type="EMBL" id="BAC97902.1"/>
    </source>
</evidence>
<evidence type="ECO:0000312" key="8">
    <source>
        <dbReference type="MGI" id="MGI:2443957"/>
    </source>
</evidence>
<accession>Q7TSH3</accession>
<gene>
    <name evidence="1" type="primary">Znf516</name>
    <name evidence="7" type="synonym">Kiaa0222</name>
    <name evidence="8" type="synonym">Zfp516</name>
</gene>
<keyword id="KW-0238">DNA-binding</keyword>
<keyword id="KW-1017">Isopeptide bond</keyword>
<keyword id="KW-0479">Metal-binding</keyword>
<keyword id="KW-0539">Nucleus</keyword>
<keyword id="KW-1185">Reference proteome</keyword>
<keyword id="KW-0677">Repeat</keyword>
<keyword id="KW-0804">Transcription</keyword>
<keyword id="KW-0805">Transcription regulation</keyword>
<keyword id="KW-0832">Ubl conjugation</keyword>
<keyword id="KW-0862">Zinc</keyword>
<keyword id="KW-0863">Zinc-finger</keyword>
<comment type="function">
    <text evidence="1 4">Transcriptional regulator that binds to the promoter and activates the transcription of genes promoting brown adipose tissue (BAT) differentiation. Among brown adipose tissue-specific genes, binds the proximal region of the promoter of the UCP1 gene to activate its transcription and thereby regulate thermogenesis. May also play a role in the cellular response to replication stress (By similarity).</text>
</comment>
<comment type="subunit">
    <text evidence="4 5">Interacts with PRDM16; the interaction is direct and may play a role in the transcription of brown adipose tissue-specific genes (PubMed:25578880). Interacts with PWWP2B (PubMed:34180153). Interacts with HDAC1; this interaction is enhanced in the presence of PWWP2B (PubMed:34180153).</text>
</comment>
<comment type="subcellular location">
    <subcellularLocation>
        <location evidence="4">Nucleus</location>
    </subcellularLocation>
</comment>
<comment type="tissue specificity">
    <text evidence="4">Expressed by adipocytes more specifically in brown adipose tissue compared to white adipose tissue (WAT).</text>
</comment>
<comment type="induction">
    <text evidence="4">Up-regulated in response to cold in brown and subcutaneous white adipose tissue where it may regulate non-shivering thermogenesis (at protein level).</text>
</comment>
<comment type="disruption phenotype">
    <text evidence="4">Knockout mice die immediately after birth. 20.5 dpc embryos display an impaired development of brown adipose tissue.</text>
</comment>
<comment type="similarity">
    <text evidence="6">Belongs to the krueppel C2H2-type zinc-finger protein family.</text>
</comment>
<feature type="chain" id="PRO_0000047635" description="Zinc finger protein 516">
    <location>
        <begin position="1"/>
        <end position="1157"/>
    </location>
</feature>
<feature type="zinc finger region" description="C2H2-type 1" evidence="2">
    <location>
        <begin position="34"/>
        <end position="56"/>
    </location>
</feature>
<feature type="zinc finger region" description="C2H2-type 2" evidence="2">
    <location>
        <begin position="62"/>
        <end position="84"/>
    </location>
</feature>
<feature type="zinc finger region" description="C2H2-type 3" evidence="2">
    <location>
        <begin position="162"/>
        <end position="185"/>
    </location>
</feature>
<feature type="zinc finger region" description="C2H2-type 4" evidence="2">
    <location>
        <begin position="188"/>
        <end position="211"/>
    </location>
</feature>
<feature type="zinc finger region" description="C2H2-type 5" evidence="2">
    <location>
        <begin position="236"/>
        <end position="258"/>
    </location>
</feature>
<feature type="zinc finger region" description="C2H2-type 6" evidence="2">
    <location>
        <begin position="264"/>
        <end position="286"/>
    </location>
</feature>
<feature type="zinc finger region" description="C2H2-type 7" evidence="2">
    <location>
        <begin position="323"/>
        <end position="345"/>
    </location>
</feature>
<feature type="zinc finger region" description="C2H2-type 8" evidence="2">
    <location>
        <begin position="504"/>
        <end position="526"/>
    </location>
</feature>
<feature type="zinc finger region" description="C2H2-type 9; atypical" evidence="2">
    <location>
        <begin position="753"/>
        <end position="776"/>
    </location>
</feature>
<feature type="zinc finger region" description="C2H2-type 10" evidence="2">
    <location>
        <begin position="1092"/>
        <end position="1114"/>
    </location>
</feature>
<feature type="region of interest" description="Mediates promoter DNA-binding and activation of transcription" evidence="4">
    <location>
        <begin position="1"/>
        <end position="420"/>
    </location>
</feature>
<feature type="region of interest" description="Disordered" evidence="3">
    <location>
        <begin position="1"/>
        <end position="26"/>
    </location>
</feature>
<feature type="region of interest" description="Disordered" evidence="3">
    <location>
        <begin position="449"/>
        <end position="503"/>
    </location>
</feature>
<feature type="region of interest" description="Disordered" evidence="3">
    <location>
        <begin position="523"/>
        <end position="653"/>
    </location>
</feature>
<feature type="region of interest" description="Disordered" evidence="3">
    <location>
        <begin position="831"/>
        <end position="996"/>
    </location>
</feature>
<feature type="region of interest" description="Disordered" evidence="3">
    <location>
        <begin position="1013"/>
        <end position="1040"/>
    </location>
</feature>
<feature type="region of interest" description="Disordered" evidence="3">
    <location>
        <begin position="1123"/>
        <end position="1157"/>
    </location>
</feature>
<feature type="compositionally biased region" description="Basic and acidic residues" evidence="3">
    <location>
        <begin position="1"/>
        <end position="13"/>
    </location>
</feature>
<feature type="compositionally biased region" description="Basic and acidic residues" evidence="3">
    <location>
        <begin position="449"/>
        <end position="458"/>
    </location>
</feature>
<feature type="compositionally biased region" description="Polar residues" evidence="3">
    <location>
        <begin position="494"/>
        <end position="503"/>
    </location>
</feature>
<feature type="compositionally biased region" description="Basic and acidic residues" evidence="3">
    <location>
        <begin position="531"/>
        <end position="541"/>
    </location>
</feature>
<feature type="compositionally biased region" description="Polar residues" evidence="3">
    <location>
        <begin position="550"/>
        <end position="561"/>
    </location>
</feature>
<feature type="compositionally biased region" description="Acidic residues" evidence="3">
    <location>
        <begin position="575"/>
        <end position="585"/>
    </location>
</feature>
<feature type="compositionally biased region" description="Polar residues" evidence="3">
    <location>
        <begin position="601"/>
        <end position="612"/>
    </location>
</feature>
<feature type="compositionally biased region" description="Basic and acidic residues" evidence="3">
    <location>
        <begin position="644"/>
        <end position="653"/>
    </location>
</feature>
<feature type="compositionally biased region" description="Polar residues" evidence="3">
    <location>
        <begin position="914"/>
        <end position="928"/>
    </location>
</feature>
<feature type="cross-link" description="Glycyl lysine isopeptide (Lys-Gly) (interchain with G-Cter in SUMO2)" evidence="1">
    <location>
        <position position="630"/>
    </location>
</feature>
<feature type="cross-link" description="Glycyl lysine isopeptide (Lys-Gly) (interchain with G-Cter in SUMO2)" evidence="1">
    <location>
        <position position="669"/>
    </location>
</feature>
<feature type="cross-link" description="Glycyl lysine isopeptide (Lys-Gly) (interchain with G-Cter in SUMO2)" evidence="1">
    <location>
        <position position="1032"/>
    </location>
</feature>
<feature type="cross-link" description="Glycyl lysine isopeptide (Lys-Gly) (interchain with G-Cter in SUMO2)" evidence="1">
    <location>
        <position position="1051"/>
    </location>
</feature>